<sequence length="471" mass="53463">MRFLFLMITLTALTGYILADEQPTFRWAVVHDPSIIKVGNMYYVFGTHLQVAKSKDLMHWEQINTSAHDKNPIIPNINEELKETLSWARTRNDIWAPQVIQLSDGRYYMYYCASTFGSPRSAIGIAVSDDIEGPYKHYAVIVKSGQVYSVDGPSEDGTPYDSRKHPNALDPGVFYDKEGNLWMVYGSWFGGIYILKLDPNTGLPLPGQGYGKRLVGGNHSSMEGPYILYSPDTDYYYLFLSFGGLDYRGGYNIRVARSKNPNGPYYDPEGKSMENCMGSKTVISNYGAKLVGNFILSESNTIDFKAFGYVSPGHNSAYYDPETGKYFIFFHTRFPGRGETYQLRVHQLFLNEDGWFVMAPFPYGGETVSKLPNEEIVGEYQFINHGKEITDKIKQPVRIKLNSDGSITGAVEGRWERKEHYITLKIIEGNTTVIYKGVLLKQWHYSEKKWVTVFTALSNQGVSVWGIRVEE</sequence>
<comment type="function">
    <text evidence="3">Involved in the degradation of arabinan and is a key enzyme in the complete degradation of the plant cell wall. Catalyzes the internal cleavage of alpha-(1-&gt;5)-L-arabinofuranosyl residues in different arabinan-containing polysaccharides, and releases arabinotriose and arabinobiose as end products. It acts on branched arabinan (from sugar beet), but more slowly when compared to linear or debranched arabinan.</text>
</comment>
<comment type="catalytic activity">
    <reaction evidence="3">
        <text>Endohydrolysis of (1-&gt;5)-alpha-arabinofuranosidic linkages in (1-&gt;5)-arabinans.</text>
        <dbReference type="EC" id="3.2.1.99"/>
    </reaction>
</comment>
<comment type="cofactor">
    <cofactor evidence="1">
        <name>Ca(2+)</name>
        <dbReference type="ChEBI" id="CHEBI:29108"/>
    </cofactor>
    <text evidence="1">Binds 1 Ca(2+) ion per subunit.</text>
</comment>
<comment type="biophysicochemical properties">
    <phDependence>
        <text evidence="3">Optimum pH is 6.0. It retains more than 75% activity over a pH range from 4 to 7.</text>
    </phDependence>
    <temperatureDependence>
        <text evidence="3">Optimum temperature is 73 degrees Celsius. It is fully heat-stable (up to 10 hours) and retains activity at temperatures up to 90 degrees Celsius. The enzyme loses its activity only after 90 minutes when incubated at 95 degrees Celsius.</text>
    </temperatureDependence>
</comment>
<comment type="pathway">
    <text>Glycan metabolism; L-arabinan degradation.</text>
</comment>
<comment type="subunit">
    <text evidence="3">Monomer.</text>
</comment>
<comment type="subcellular location">
    <subcellularLocation>
        <location evidence="1">Secreted</location>
    </subcellularLocation>
</comment>
<comment type="miscellaneous">
    <text>Although it functions as an extracellular endo-alpha-(1-&gt;5)-L-arabinanase, its sequence is quite divergent from the B.subtilis enzyme.</text>
</comment>
<comment type="similarity">
    <text evidence="4">Belongs to the glycosyl hydrolase 43 family.</text>
</comment>
<keyword id="KW-0002">3D-structure</keyword>
<keyword id="KW-0106">Calcium</keyword>
<keyword id="KW-0119">Carbohydrate metabolism</keyword>
<keyword id="KW-0326">Glycosidase</keyword>
<keyword id="KW-0378">Hydrolase</keyword>
<keyword id="KW-0479">Metal-binding</keyword>
<keyword id="KW-0964">Secreted</keyword>
<keyword id="KW-0732">Signal</keyword>
<name>EABN_THEP1</name>
<reference key="1">
    <citation type="submission" date="2007-05" db="EMBL/GenBank/DDBJ databases">
        <title>Complete sequence of Thermotoga petrophila RKU-1.</title>
        <authorList>
            <consortium name="US DOE Joint Genome Institute"/>
            <person name="Copeland A."/>
            <person name="Lucas S."/>
            <person name="Lapidus A."/>
            <person name="Barry K."/>
            <person name="Glavina del Rio T."/>
            <person name="Dalin E."/>
            <person name="Tice H."/>
            <person name="Pitluck S."/>
            <person name="Sims D."/>
            <person name="Brettin T."/>
            <person name="Bruce D."/>
            <person name="Detter J.C."/>
            <person name="Han C."/>
            <person name="Tapia R."/>
            <person name="Schmutz J."/>
            <person name="Larimer F."/>
            <person name="Land M."/>
            <person name="Hauser L."/>
            <person name="Kyrpides N."/>
            <person name="Mikhailova N."/>
            <person name="Nelson K."/>
            <person name="Gogarten J.P."/>
            <person name="Noll K."/>
            <person name="Richardson P."/>
        </authorList>
    </citation>
    <scope>NUCLEOTIDE SEQUENCE [LARGE SCALE GENOMIC DNA]</scope>
    <source>
        <strain>ATCC BAA-488 / DSM 13995 / JCM 10881 / RKU-1</strain>
    </source>
</reference>
<reference key="2">
    <citation type="journal article" date="2010" name="Biochem. Biophys. Res. Commun.">
        <title>Substrate cleavage pattern, biophysical characterization and low-resolution structure of a novel hyperthermostable arabinanase from Thermotoga petrophila.</title>
        <authorList>
            <person name="Squina F.M."/>
            <person name="Santos C.R."/>
            <person name="Ribeiro D.A."/>
            <person name="Cota J."/>
            <person name="de Oliveira R.R."/>
            <person name="Ruller R."/>
            <person name="Mort A."/>
            <person name="Murakami M.T."/>
            <person name="Prade R.A."/>
        </authorList>
    </citation>
    <scope>FUNCTION</scope>
    <scope>CATALYTIC ACTIVITY</scope>
    <scope>BIOPHYSICOCHEMICAL PROPERTIES</scope>
    <scope>SUBUNIT</scope>
</reference>
<reference key="3">
    <citation type="journal article" date="2014" name="J. Biol. Chem.">
        <title>Mechanistic strategies for catalysis adopted by evolutionary distinct family 43 arabinanases.</title>
        <authorList>
            <person name="Santos C.R."/>
            <person name="Polo C.C."/>
            <person name="Costa M.C."/>
            <person name="Nascimento A.F."/>
            <person name="Meza A.N."/>
            <person name="Cota J."/>
            <person name="Hoffmam Z.B."/>
            <person name="Honorato R.V."/>
            <person name="Oliveira P.S."/>
            <person name="Goldman G.H."/>
            <person name="Gilbert H.J."/>
            <person name="Prade R.A."/>
            <person name="Ruller R."/>
            <person name="Squina F.M."/>
            <person name="Wong D.W."/>
            <person name="Murakami M.T."/>
        </authorList>
    </citation>
    <scope>X-RAY CRYSTALLOGRAPHY (1.75 ANGSTROMS) OF 21-471</scope>
    <scope>ACTIVE SITE</scope>
</reference>
<proteinExistence type="evidence at protein level"/>
<organism>
    <name type="scientific">Thermotoga petrophila (strain ATCC BAA-488 / DSM 13995 / JCM 10881 / RKU-1)</name>
    <dbReference type="NCBI Taxonomy" id="390874"/>
    <lineage>
        <taxon>Bacteria</taxon>
        <taxon>Thermotogati</taxon>
        <taxon>Thermotogota</taxon>
        <taxon>Thermotogae</taxon>
        <taxon>Thermotogales</taxon>
        <taxon>Thermotogaceae</taxon>
        <taxon>Thermotoga</taxon>
    </lineage>
</organism>
<gene>
    <name type="ordered locus">Tpet_0637</name>
</gene>
<feature type="signal peptide" evidence="2">
    <location>
        <begin position="1"/>
        <end position="19"/>
    </location>
</feature>
<feature type="chain" id="PRO_5000246952" description="Extracellular endo-alpha-(1-&gt;5)-L-arabinanase">
    <location>
        <begin position="20"/>
        <end position="471"/>
    </location>
</feature>
<feature type="active site" description="Proton acceptor" evidence="5">
    <location>
        <position position="32"/>
    </location>
</feature>
<feature type="active site" description="Proton donor" evidence="5">
    <location>
        <position position="223"/>
    </location>
</feature>
<feature type="binding site" evidence="1">
    <location>
        <position position="32"/>
    </location>
    <ligand>
        <name>substrate</name>
    </ligand>
</feature>
<feature type="binding site" evidence="5">
    <location>
        <position position="117"/>
    </location>
    <ligand>
        <name>substrate</name>
    </ligand>
</feature>
<feature type="binding site" evidence="1">
    <location>
        <begin position="167"/>
        <end position="170"/>
    </location>
    <ligand>
        <name>substrate</name>
    </ligand>
</feature>
<feature type="binding site" evidence="1">
    <location>
        <begin position="187"/>
        <end position="189"/>
    </location>
    <ligand>
        <name>substrate</name>
    </ligand>
</feature>
<feature type="binding site" evidence="1">
    <location>
        <begin position="219"/>
        <end position="223"/>
    </location>
    <ligand>
        <name>substrate</name>
    </ligand>
</feature>
<feature type="binding site" evidence="1">
    <location>
        <position position="314"/>
    </location>
    <ligand>
        <name>Ca(2+)</name>
        <dbReference type="ChEBI" id="CHEBI:29108"/>
    </ligand>
</feature>
<feature type="site" description="Important for catalytic activity" evidence="1">
    <location>
        <position position="170"/>
    </location>
</feature>
<feature type="site" description="Important for substrate recognition" evidence="1">
    <location>
        <position position="314"/>
    </location>
</feature>
<feature type="strand" evidence="6">
    <location>
        <begin position="34"/>
        <end position="38"/>
    </location>
</feature>
<feature type="strand" evidence="6">
    <location>
        <begin position="41"/>
        <end position="46"/>
    </location>
</feature>
<feature type="helix" evidence="6">
    <location>
        <begin position="47"/>
        <end position="49"/>
    </location>
</feature>
<feature type="strand" evidence="6">
    <location>
        <begin position="50"/>
        <end position="59"/>
    </location>
</feature>
<feature type="strand" evidence="6">
    <location>
        <begin position="61"/>
        <end position="64"/>
    </location>
</feature>
<feature type="strand" evidence="6">
    <location>
        <begin position="72"/>
        <end position="74"/>
    </location>
</feature>
<feature type="helix" evidence="6">
    <location>
        <begin position="77"/>
        <end position="80"/>
    </location>
</feature>
<feature type="helix" evidence="6">
    <location>
        <begin position="82"/>
        <end position="88"/>
    </location>
</feature>
<feature type="strand" evidence="6">
    <location>
        <begin position="95"/>
        <end position="101"/>
    </location>
</feature>
<feature type="strand" evidence="6">
    <location>
        <begin position="107"/>
        <end position="113"/>
    </location>
</feature>
<feature type="strand" evidence="6">
    <location>
        <begin position="121"/>
        <end position="130"/>
    </location>
</feature>
<feature type="strand" evidence="6">
    <location>
        <begin position="136"/>
        <end position="144"/>
    </location>
</feature>
<feature type="helix" evidence="6">
    <location>
        <begin position="148"/>
        <end position="151"/>
    </location>
</feature>
<feature type="turn" evidence="6">
    <location>
        <begin position="162"/>
        <end position="164"/>
    </location>
</feature>
<feature type="strand" evidence="6">
    <location>
        <begin position="172"/>
        <end position="175"/>
    </location>
</feature>
<feature type="strand" evidence="6">
    <location>
        <begin position="181"/>
        <end position="185"/>
    </location>
</feature>
<feature type="strand" evidence="6">
    <location>
        <begin position="192"/>
        <end position="197"/>
    </location>
</feature>
<feature type="turn" evidence="6">
    <location>
        <begin position="199"/>
        <end position="201"/>
    </location>
</feature>
<feature type="strand" evidence="6">
    <location>
        <begin position="212"/>
        <end position="215"/>
    </location>
</feature>
<feature type="strand" evidence="6">
    <location>
        <begin position="221"/>
        <end position="229"/>
    </location>
</feature>
<feature type="turn" evidence="6">
    <location>
        <begin position="231"/>
        <end position="233"/>
    </location>
</feature>
<feature type="strand" evidence="6">
    <location>
        <begin position="236"/>
        <end position="246"/>
    </location>
</feature>
<feature type="strand" evidence="6">
    <location>
        <begin position="252"/>
        <end position="260"/>
    </location>
</feature>
<feature type="helix" evidence="6">
    <location>
        <begin position="273"/>
        <end position="275"/>
    </location>
</feature>
<feature type="helix" evidence="6">
    <location>
        <begin position="280"/>
        <end position="283"/>
    </location>
</feature>
<feature type="strand" evidence="6">
    <location>
        <begin position="286"/>
        <end position="291"/>
    </location>
</feature>
<feature type="strand" evidence="6">
    <location>
        <begin position="293"/>
        <end position="296"/>
    </location>
</feature>
<feature type="strand" evidence="6">
    <location>
        <begin position="308"/>
        <end position="319"/>
    </location>
</feature>
<feature type="turn" evidence="6">
    <location>
        <begin position="321"/>
        <end position="323"/>
    </location>
</feature>
<feature type="strand" evidence="6">
    <location>
        <begin position="326"/>
        <end position="333"/>
    </location>
</feature>
<feature type="strand" evidence="6">
    <location>
        <begin position="342"/>
        <end position="350"/>
    </location>
</feature>
<feature type="strand" evidence="6">
    <location>
        <begin position="356"/>
        <end position="358"/>
    </location>
</feature>
<feature type="helix" evidence="6">
    <location>
        <begin position="373"/>
        <end position="376"/>
    </location>
</feature>
<feature type="strand" evidence="6">
    <location>
        <begin position="378"/>
        <end position="384"/>
    </location>
</feature>
<feature type="strand" evidence="6">
    <location>
        <begin position="397"/>
        <end position="401"/>
    </location>
</feature>
<feature type="strand" evidence="6">
    <location>
        <begin position="405"/>
        <end position="411"/>
    </location>
</feature>
<feature type="strand" evidence="6">
    <location>
        <begin position="413"/>
        <end position="418"/>
    </location>
</feature>
<feature type="strand" evidence="6">
    <location>
        <begin position="421"/>
        <end position="428"/>
    </location>
</feature>
<feature type="strand" evidence="6">
    <location>
        <begin position="431"/>
        <end position="443"/>
    </location>
</feature>
<feature type="turn" evidence="6">
    <location>
        <begin position="445"/>
        <end position="447"/>
    </location>
</feature>
<feature type="strand" evidence="6">
    <location>
        <begin position="449"/>
        <end position="458"/>
    </location>
</feature>
<feature type="strand" evidence="6">
    <location>
        <begin position="463"/>
        <end position="468"/>
    </location>
</feature>
<evidence type="ECO:0000250" key="1"/>
<evidence type="ECO:0000255" key="2"/>
<evidence type="ECO:0000269" key="3">
    <source>
    </source>
</evidence>
<evidence type="ECO:0000305" key="4"/>
<evidence type="ECO:0000305" key="5">
    <source>
    </source>
</evidence>
<evidence type="ECO:0007829" key="6">
    <source>
        <dbReference type="PDB" id="4KC7"/>
    </source>
</evidence>
<dbReference type="EC" id="3.2.1.99"/>
<dbReference type="EMBL" id="CP000702">
    <property type="protein sequence ID" value="ABQ46657.1"/>
    <property type="molecule type" value="Genomic_DNA"/>
</dbReference>
<dbReference type="RefSeq" id="WP_011943247.1">
    <property type="nucleotide sequence ID" value="NC_009486.1"/>
</dbReference>
<dbReference type="PDB" id="4KC7">
    <property type="method" value="X-ray"/>
    <property type="resolution" value="1.75 A"/>
    <property type="chains" value="A/B/C=21-471"/>
</dbReference>
<dbReference type="PDB" id="4KC8">
    <property type="method" value="X-ray"/>
    <property type="resolution" value="1.76 A"/>
    <property type="chains" value="A/B/C=21-471"/>
</dbReference>
<dbReference type="PDBsum" id="4KC7"/>
<dbReference type="PDBsum" id="4KC8"/>
<dbReference type="SMR" id="A5IKD4"/>
<dbReference type="STRING" id="390874.Tpet_0637"/>
<dbReference type="CAZy" id="GH43">
    <property type="family name" value="Glycoside Hydrolase Family 43"/>
</dbReference>
<dbReference type="KEGG" id="tpt:Tpet_0637"/>
<dbReference type="eggNOG" id="COG3507">
    <property type="taxonomic scope" value="Bacteria"/>
</dbReference>
<dbReference type="HOGENOM" id="CLU_009397_1_2_0"/>
<dbReference type="BRENDA" id="3.2.1.99">
    <property type="organism ID" value="11620"/>
</dbReference>
<dbReference type="UniPathway" id="UPA00667"/>
<dbReference type="EvolutionaryTrace" id="A5IKD4"/>
<dbReference type="Proteomes" id="UP000006558">
    <property type="component" value="Chromosome"/>
</dbReference>
<dbReference type="GO" id="GO:0005576">
    <property type="term" value="C:extracellular region"/>
    <property type="evidence" value="ECO:0007669"/>
    <property type="project" value="UniProtKB-SubCell"/>
</dbReference>
<dbReference type="GO" id="GO:0046558">
    <property type="term" value="F:arabinan endo-1,5-alpha-L-arabinosidase activity"/>
    <property type="evidence" value="ECO:0007669"/>
    <property type="project" value="UniProtKB-EC"/>
</dbReference>
<dbReference type="GO" id="GO:0046872">
    <property type="term" value="F:metal ion binding"/>
    <property type="evidence" value="ECO:0007669"/>
    <property type="project" value="UniProtKB-KW"/>
</dbReference>
<dbReference type="GO" id="GO:0031222">
    <property type="term" value="P:arabinan catabolic process"/>
    <property type="evidence" value="ECO:0007669"/>
    <property type="project" value="UniProtKB-UniPathway"/>
</dbReference>
<dbReference type="CDD" id="cd18832">
    <property type="entry name" value="GH43_GsAbnA-like"/>
    <property type="match status" value="1"/>
</dbReference>
<dbReference type="Gene3D" id="2.40.128.10">
    <property type="match status" value="1"/>
</dbReference>
<dbReference type="Gene3D" id="2.115.10.20">
    <property type="entry name" value="Glycosyl hydrolase domain, family 43"/>
    <property type="match status" value="1"/>
</dbReference>
<dbReference type="InterPro" id="IPR032291">
    <property type="entry name" value="Abn2_C"/>
</dbReference>
<dbReference type="InterPro" id="IPR050727">
    <property type="entry name" value="GH43_arabinanases"/>
</dbReference>
<dbReference type="InterPro" id="IPR006710">
    <property type="entry name" value="Glyco_hydro_43"/>
</dbReference>
<dbReference type="InterPro" id="IPR023296">
    <property type="entry name" value="Glyco_hydro_beta-prop_sf"/>
</dbReference>
<dbReference type="PANTHER" id="PTHR43301">
    <property type="entry name" value="ARABINAN ENDO-1,5-ALPHA-L-ARABINOSIDASE"/>
    <property type="match status" value="1"/>
</dbReference>
<dbReference type="PANTHER" id="PTHR43301:SF3">
    <property type="entry name" value="ARABINAN ENDO-1,5-ALPHA-L-ARABINOSIDASE A-RELATED"/>
    <property type="match status" value="1"/>
</dbReference>
<dbReference type="Pfam" id="PF16369">
    <property type="entry name" value="GH43_C"/>
    <property type="match status" value="1"/>
</dbReference>
<dbReference type="Pfam" id="PF04616">
    <property type="entry name" value="Glyco_hydro_43"/>
    <property type="match status" value="1"/>
</dbReference>
<dbReference type="SUPFAM" id="SSF75005">
    <property type="entry name" value="Arabinanase/levansucrase/invertase"/>
    <property type="match status" value="1"/>
</dbReference>
<protein>
    <recommendedName>
        <fullName>Extracellular endo-alpha-(1-&gt;5)-L-arabinanase</fullName>
        <shortName>ABN</shortName>
        <ecNumber>3.2.1.99</ecNumber>
    </recommendedName>
    <alternativeName>
        <fullName>Endo-1,5-alpha-L-arabinanase</fullName>
    </alternativeName>
</protein>
<accession>A5IKD4</accession>